<reference key="1">
    <citation type="submission" date="2007-02" db="EMBL/GenBank/DDBJ databases">
        <title>Complete sequence of Mycobacterium sp. JLS.</title>
        <authorList>
            <consortium name="US DOE Joint Genome Institute"/>
            <person name="Copeland A."/>
            <person name="Lucas S."/>
            <person name="Lapidus A."/>
            <person name="Barry K."/>
            <person name="Detter J.C."/>
            <person name="Glavina del Rio T."/>
            <person name="Hammon N."/>
            <person name="Israni S."/>
            <person name="Dalin E."/>
            <person name="Tice H."/>
            <person name="Pitluck S."/>
            <person name="Chain P."/>
            <person name="Malfatti S."/>
            <person name="Shin M."/>
            <person name="Vergez L."/>
            <person name="Schmutz J."/>
            <person name="Larimer F."/>
            <person name="Land M."/>
            <person name="Hauser L."/>
            <person name="Kyrpides N."/>
            <person name="Mikhailova N."/>
            <person name="Miller C.D."/>
            <person name="Anderson A.J."/>
            <person name="Sims R.C."/>
            <person name="Richardson P."/>
        </authorList>
    </citation>
    <scope>NUCLEOTIDE SEQUENCE [LARGE SCALE GENOMIC DNA]</scope>
    <source>
        <strain>JLS</strain>
    </source>
</reference>
<protein>
    <recommendedName>
        <fullName evidence="1">Na(+)/H(+) antiporter NhaA 2</fullName>
    </recommendedName>
    <alternativeName>
        <fullName evidence="1">Sodium/proton antiporter NhaA 2</fullName>
    </alternativeName>
</protein>
<sequence>MTPTPGEADLTNTPAPRARRSVLSRGSWSETARIAGILRKETVGGAVLLVASAVALVWANSPWAESYFALRDLKIGAEPFGLHLNLTLGTWAADGLLAVFFLVVGLELKREFVAGDLRDPARAALPMAAAVGGMVVPALIFVAVTAPVGDGATRGWAIPTATDIAFAVAVLAVISTHLPAALRTFLLTLAVVDDLLAVTVIAVFYTDEINLTALGLSIVPLALFALCVQRRIRSWWLLLPLGVATWVLVHESGVHATVAGVLLGFTVPVLRSVAAGGPEAGPGLAEHFEHRLRPLSAGVAVPVFAFFAAGVAIGGVSGLTRALSDPITLGIILGLVVGKPVGIFLTTRVLTAVTRANLDDALRWIDVFGVALLAGIGFTVSLLIGDLAYGLGSDRDDFVKVGVLTGSLVAALIAAVLLRVRNRHYRAVWLQETADTDRDGVPDVYQSQRD</sequence>
<organism>
    <name type="scientific">Mycobacterium sp. (strain JLS)</name>
    <dbReference type="NCBI Taxonomy" id="164757"/>
    <lineage>
        <taxon>Bacteria</taxon>
        <taxon>Bacillati</taxon>
        <taxon>Actinomycetota</taxon>
        <taxon>Actinomycetes</taxon>
        <taxon>Mycobacteriales</taxon>
        <taxon>Mycobacteriaceae</taxon>
        <taxon>Mycobacterium</taxon>
    </lineage>
</organism>
<evidence type="ECO:0000255" key="1">
    <source>
        <dbReference type="HAMAP-Rule" id="MF_01844"/>
    </source>
</evidence>
<accession>A3PYK5</accession>
<proteinExistence type="inferred from homology"/>
<gene>
    <name evidence="1" type="primary">nhaA2</name>
    <name type="ordered locus">Mjls_2196</name>
</gene>
<keyword id="KW-0050">Antiport</keyword>
<keyword id="KW-1003">Cell membrane</keyword>
<keyword id="KW-0406">Ion transport</keyword>
<keyword id="KW-0472">Membrane</keyword>
<keyword id="KW-0915">Sodium</keyword>
<keyword id="KW-0739">Sodium transport</keyword>
<keyword id="KW-0812">Transmembrane</keyword>
<keyword id="KW-1133">Transmembrane helix</keyword>
<keyword id="KW-0813">Transport</keyword>
<name>NHAA2_MYCSJ</name>
<feature type="chain" id="PRO_0000334339" description="Na(+)/H(+) antiporter NhaA 2">
    <location>
        <begin position="1"/>
        <end position="450"/>
    </location>
</feature>
<feature type="transmembrane region" description="Helical" evidence="1">
    <location>
        <begin position="43"/>
        <end position="63"/>
    </location>
</feature>
<feature type="transmembrane region" description="Helical" evidence="1">
    <location>
        <begin position="86"/>
        <end position="106"/>
    </location>
</feature>
<feature type="transmembrane region" description="Helical" evidence="1">
    <location>
        <begin position="124"/>
        <end position="144"/>
    </location>
</feature>
<feature type="transmembrane region" description="Helical" evidence="1">
    <location>
        <begin position="155"/>
        <end position="175"/>
    </location>
</feature>
<feature type="transmembrane region" description="Helical" evidence="1">
    <location>
        <begin position="185"/>
        <end position="205"/>
    </location>
</feature>
<feature type="transmembrane region" description="Helical" evidence="1">
    <location>
        <begin position="208"/>
        <end position="228"/>
    </location>
</feature>
<feature type="transmembrane region" description="Helical" evidence="1">
    <location>
        <begin position="234"/>
        <end position="254"/>
    </location>
</feature>
<feature type="transmembrane region" description="Helical" evidence="1">
    <location>
        <begin position="258"/>
        <end position="278"/>
    </location>
</feature>
<feature type="transmembrane region" description="Helical" evidence="1">
    <location>
        <begin position="299"/>
        <end position="319"/>
    </location>
</feature>
<feature type="transmembrane region" description="Helical" evidence="1">
    <location>
        <begin position="326"/>
        <end position="346"/>
    </location>
</feature>
<feature type="transmembrane region" description="Helical" evidence="1">
    <location>
        <begin position="364"/>
        <end position="384"/>
    </location>
</feature>
<feature type="transmembrane region" description="Helical" evidence="1">
    <location>
        <begin position="398"/>
        <end position="418"/>
    </location>
</feature>
<dbReference type="EMBL" id="CP000580">
    <property type="protein sequence ID" value="ABN97982.1"/>
    <property type="molecule type" value="Genomic_DNA"/>
</dbReference>
<dbReference type="SMR" id="A3PYK5"/>
<dbReference type="KEGG" id="mjl:Mjls_2196"/>
<dbReference type="HOGENOM" id="CLU_015803_0_0_11"/>
<dbReference type="BioCyc" id="MSP164757:G1G8C-2216-MONOMER"/>
<dbReference type="GO" id="GO:0005886">
    <property type="term" value="C:plasma membrane"/>
    <property type="evidence" value="ECO:0007669"/>
    <property type="project" value="UniProtKB-SubCell"/>
</dbReference>
<dbReference type="GO" id="GO:0015385">
    <property type="term" value="F:sodium:proton antiporter activity"/>
    <property type="evidence" value="ECO:0007669"/>
    <property type="project" value="TreeGrafter"/>
</dbReference>
<dbReference type="GO" id="GO:0006885">
    <property type="term" value="P:regulation of pH"/>
    <property type="evidence" value="ECO:0007669"/>
    <property type="project" value="InterPro"/>
</dbReference>
<dbReference type="Gene3D" id="1.20.1530.10">
    <property type="entry name" value="Na+/H+ antiporter like domain"/>
    <property type="match status" value="1"/>
</dbReference>
<dbReference type="HAMAP" id="MF_01844">
    <property type="entry name" value="NhaA"/>
    <property type="match status" value="1"/>
</dbReference>
<dbReference type="InterPro" id="IPR023171">
    <property type="entry name" value="Na/H_antiporter_dom_sf"/>
</dbReference>
<dbReference type="InterPro" id="IPR004670">
    <property type="entry name" value="NhaA"/>
</dbReference>
<dbReference type="NCBIfam" id="TIGR00773">
    <property type="entry name" value="NhaA"/>
    <property type="match status" value="1"/>
</dbReference>
<dbReference type="PANTHER" id="PTHR30341:SF0">
    <property type="entry name" value="NA(+)_H(+) ANTIPORTER NHAA"/>
    <property type="match status" value="1"/>
</dbReference>
<dbReference type="PANTHER" id="PTHR30341">
    <property type="entry name" value="SODIUM ION/PROTON ANTIPORTER NHAA-RELATED"/>
    <property type="match status" value="1"/>
</dbReference>
<dbReference type="Pfam" id="PF06965">
    <property type="entry name" value="Na_H_antiport_1"/>
    <property type="match status" value="1"/>
</dbReference>
<comment type="function">
    <text evidence="1">Na(+)/H(+) antiporter that extrudes sodium in exchange for external protons.</text>
</comment>
<comment type="catalytic activity">
    <reaction evidence="1">
        <text>Na(+)(in) + 2 H(+)(out) = Na(+)(out) + 2 H(+)(in)</text>
        <dbReference type="Rhea" id="RHEA:29251"/>
        <dbReference type="ChEBI" id="CHEBI:15378"/>
        <dbReference type="ChEBI" id="CHEBI:29101"/>
    </reaction>
    <physiologicalReaction direction="left-to-right" evidence="1">
        <dbReference type="Rhea" id="RHEA:29252"/>
    </physiologicalReaction>
</comment>
<comment type="subcellular location">
    <subcellularLocation>
        <location evidence="1">Cell membrane</location>
        <topology evidence="1">Multi-pass membrane protein</topology>
    </subcellularLocation>
</comment>
<comment type="similarity">
    <text evidence="1">Belongs to the NhaA Na(+)/H(+) (TC 2.A.33) antiporter family.</text>
</comment>